<sequence length="870" mass="99892">MLNIAQRIFGSTNTRLVKSLYKIVNQINAIEHEFQILSDESLKNKTIEFKEQLNNGKTLDDILVPAFAVVREASKRILNMRHFDVQLIGGIVLHKGMISEMKTGEGKTLVATLAAYLNALEGKGVHVVTVNDYLAKRDADWMGELYNSLGITVGCILSDTNDLDRKKAYNCDIVYSTNNNLGFDYLRDNMKFSRNEMVQRGFNYAIVDEVDLILIDEARTPLIISGQVDQDIKMYNKIDKLIYELSEEDYELEEKHRNIFLTECGITKIENLLIQHKLISSNTSLYDIDNMIIMHYITQALRAHKIFSLDKDYIIKDGNIIIIDEFTGRMMDGRRYSDGLHQAIEAKEKLNVNNENQTLASITFQNYFRMYKKLSGMTGTAETESEELLGIYNLQVVQIPTNTPVQRIDLNDDIYCTEEEKFDAIIKFISECHKKLQPVLVGTISIEKSEILSKLLTKNKLKHSVLNARYHEQEAYIIAQAGIPGTITIATNMAGRGTDIQLGGNLKMLAKTTLANILDKEIISIKYKQLVEKVNKDKEIAIQAGGLCVIGTERHESRRIDNQLRGRSGRQGDPGLSKFFLSLEDDLLRIFGSDKIKGMLKKLGMKKGEAIQHTWISRAIEKAQHKVELRNYDIRKSLLKFDNVINEQRKVVFDQRNRILDNDSYNISLIYRDINSDIVNNIIHDKYYNLDDETYKLISSEITRIYSITLDYNTISELESKNKLIEHINNITDEFFNKKIAEFTSKEKDLWDNLTKKVMIMSLDYLWREHLAALDSLKCGINLRSIAQKDPLNEFKSEAFSMLESMMSNFYELIIQRLAHLKSDNIFHSYSKELNNLQSSQDINSIKISRNEKCPCGSGKKYKHCHGENI</sequence>
<reference key="1">
    <citation type="journal article" date="2005" name="Proc. Natl. Acad. Sci. U.S.A.">
        <title>The genome of the heartwater agent Ehrlichia ruminantium contains multiple tandem repeats of actively variable copy number.</title>
        <authorList>
            <person name="Collins N.E."/>
            <person name="Liebenberg J."/>
            <person name="de Villiers E.P."/>
            <person name="Brayton K.A."/>
            <person name="Louw E."/>
            <person name="Pretorius A."/>
            <person name="Faber F.E."/>
            <person name="van Heerden H."/>
            <person name="Josemans A."/>
            <person name="van Kleef M."/>
            <person name="Steyn H.C."/>
            <person name="van Strijp M.F."/>
            <person name="Zweygarth E."/>
            <person name="Jongejan F."/>
            <person name="Maillard J.C."/>
            <person name="Berthier D."/>
            <person name="Botha M."/>
            <person name="Joubert F."/>
            <person name="Corton C.H."/>
            <person name="Thomson N.R."/>
            <person name="Allsopp M.T."/>
            <person name="Allsopp B.A."/>
        </authorList>
    </citation>
    <scope>NUCLEOTIDE SEQUENCE [LARGE SCALE GENOMIC DNA]</scope>
    <source>
        <strain>Welgevonden</strain>
    </source>
</reference>
<reference key="2">
    <citation type="journal article" date="2006" name="J. Bacteriol.">
        <title>Comparative genomic analysis of three strains of Ehrlichia ruminantium reveals an active process of genome size plasticity.</title>
        <authorList>
            <person name="Frutos R."/>
            <person name="Viari A."/>
            <person name="Ferraz C."/>
            <person name="Morgat A."/>
            <person name="Eychenie S."/>
            <person name="Kandassamy Y."/>
            <person name="Chantal I."/>
            <person name="Bensaid A."/>
            <person name="Coissac E."/>
            <person name="Vachiery N."/>
            <person name="Demaille J."/>
            <person name="Martinez D."/>
        </authorList>
    </citation>
    <scope>NUCLEOTIDE SEQUENCE [LARGE SCALE GENOMIC DNA]</scope>
    <source>
        <strain>Welgevonden</strain>
    </source>
</reference>
<name>SECA_EHRRW</name>
<dbReference type="EC" id="7.4.2.8" evidence="1"/>
<dbReference type="EMBL" id="CR767821">
    <property type="protein sequence ID" value="CAH58613.1"/>
    <property type="molecule type" value="Genomic_DNA"/>
</dbReference>
<dbReference type="EMBL" id="CR925678">
    <property type="protein sequence ID" value="CAI27423.1"/>
    <property type="molecule type" value="Genomic_DNA"/>
</dbReference>
<dbReference type="RefSeq" id="WP_011155556.1">
    <property type="nucleotide sequence ID" value="NC_005295.2"/>
</dbReference>
<dbReference type="SMR" id="Q5HA05"/>
<dbReference type="GeneID" id="33058266"/>
<dbReference type="KEGG" id="eru:Erum8780"/>
<dbReference type="KEGG" id="erw:ERWE_CDS_09290"/>
<dbReference type="eggNOG" id="COG0653">
    <property type="taxonomic scope" value="Bacteria"/>
</dbReference>
<dbReference type="HOGENOM" id="CLU_005314_3_0_5"/>
<dbReference type="Proteomes" id="UP000001021">
    <property type="component" value="Chromosome"/>
</dbReference>
<dbReference type="GO" id="GO:0031522">
    <property type="term" value="C:cell envelope Sec protein transport complex"/>
    <property type="evidence" value="ECO:0007669"/>
    <property type="project" value="TreeGrafter"/>
</dbReference>
<dbReference type="GO" id="GO:0005829">
    <property type="term" value="C:cytosol"/>
    <property type="evidence" value="ECO:0007669"/>
    <property type="project" value="TreeGrafter"/>
</dbReference>
<dbReference type="GO" id="GO:0005886">
    <property type="term" value="C:plasma membrane"/>
    <property type="evidence" value="ECO:0007669"/>
    <property type="project" value="UniProtKB-SubCell"/>
</dbReference>
<dbReference type="GO" id="GO:0005524">
    <property type="term" value="F:ATP binding"/>
    <property type="evidence" value="ECO:0007669"/>
    <property type="project" value="UniProtKB-UniRule"/>
</dbReference>
<dbReference type="GO" id="GO:0046872">
    <property type="term" value="F:metal ion binding"/>
    <property type="evidence" value="ECO:0007669"/>
    <property type="project" value="UniProtKB-KW"/>
</dbReference>
<dbReference type="GO" id="GO:0008564">
    <property type="term" value="F:protein-exporting ATPase activity"/>
    <property type="evidence" value="ECO:0007669"/>
    <property type="project" value="UniProtKB-EC"/>
</dbReference>
<dbReference type="GO" id="GO:0065002">
    <property type="term" value="P:intracellular protein transmembrane transport"/>
    <property type="evidence" value="ECO:0007669"/>
    <property type="project" value="UniProtKB-UniRule"/>
</dbReference>
<dbReference type="GO" id="GO:0017038">
    <property type="term" value="P:protein import"/>
    <property type="evidence" value="ECO:0007669"/>
    <property type="project" value="InterPro"/>
</dbReference>
<dbReference type="GO" id="GO:0006605">
    <property type="term" value="P:protein targeting"/>
    <property type="evidence" value="ECO:0007669"/>
    <property type="project" value="UniProtKB-UniRule"/>
</dbReference>
<dbReference type="GO" id="GO:0043952">
    <property type="term" value="P:protein transport by the Sec complex"/>
    <property type="evidence" value="ECO:0007669"/>
    <property type="project" value="TreeGrafter"/>
</dbReference>
<dbReference type="CDD" id="cd17928">
    <property type="entry name" value="DEXDc_SecA"/>
    <property type="match status" value="1"/>
</dbReference>
<dbReference type="CDD" id="cd18803">
    <property type="entry name" value="SF2_C_secA"/>
    <property type="match status" value="1"/>
</dbReference>
<dbReference type="FunFam" id="3.40.50.300:FF:000113">
    <property type="entry name" value="Preprotein translocase subunit SecA"/>
    <property type="match status" value="1"/>
</dbReference>
<dbReference type="FunFam" id="3.90.1440.10:FF:000001">
    <property type="entry name" value="Preprotein translocase subunit SecA"/>
    <property type="match status" value="1"/>
</dbReference>
<dbReference type="Gene3D" id="1.10.3060.10">
    <property type="entry name" value="Helical scaffold and wing domains of SecA"/>
    <property type="match status" value="1"/>
</dbReference>
<dbReference type="Gene3D" id="3.40.50.300">
    <property type="entry name" value="P-loop containing nucleotide triphosphate hydrolases"/>
    <property type="match status" value="2"/>
</dbReference>
<dbReference type="Gene3D" id="3.90.1440.10">
    <property type="entry name" value="SecA, preprotein cross-linking domain"/>
    <property type="match status" value="1"/>
</dbReference>
<dbReference type="HAMAP" id="MF_01382">
    <property type="entry name" value="SecA"/>
    <property type="match status" value="1"/>
</dbReference>
<dbReference type="InterPro" id="IPR014001">
    <property type="entry name" value="Helicase_ATP-bd"/>
</dbReference>
<dbReference type="InterPro" id="IPR001650">
    <property type="entry name" value="Helicase_C-like"/>
</dbReference>
<dbReference type="InterPro" id="IPR027417">
    <property type="entry name" value="P-loop_NTPase"/>
</dbReference>
<dbReference type="InterPro" id="IPR004027">
    <property type="entry name" value="SEC_C_motif"/>
</dbReference>
<dbReference type="InterPro" id="IPR000185">
    <property type="entry name" value="SecA"/>
</dbReference>
<dbReference type="InterPro" id="IPR020937">
    <property type="entry name" value="SecA_CS"/>
</dbReference>
<dbReference type="InterPro" id="IPR011115">
    <property type="entry name" value="SecA_DEAD"/>
</dbReference>
<dbReference type="InterPro" id="IPR014018">
    <property type="entry name" value="SecA_motor_DEAD"/>
</dbReference>
<dbReference type="InterPro" id="IPR011130">
    <property type="entry name" value="SecA_preprotein_X-link_dom"/>
</dbReference>
<dbReference type="InterPro" id="IPR044722">
    <property type="entry name" value="SecA_SF2_C"/>
</dbReference>
<dbReference type="InterPro" id="IPR011116">
    <property type="entry name" value="SecA_Wing/Scaffold"/>
</dbReference>
<dbReference type="InterPro" id="IPR036266">
    <property type="entry name" value="SecA_Wing/Scaffold_sf"/>
</dbReference>
<dbReference type="InterPro" id="IPR036670">
    <property type="entry name" value="SecA_X-link_sf"/>
</dbReference>
<dbReference type="NCBIfam" id="NF009538">
    <property type="entry name" value="PRK12904.1"/>
    <property type="match status" value="1"/>
</dbReference>
<dbReference type="NCBIfam" id="TIGR00963">
    <property type="entry name" value="secA"/>
    <property type="match status" value="1"/>
</dbReference>
<dbReference type="PANTHER" id="PTHR30612:SF0">
    <property type="entry name" value="CHLOROPLAST PROTEIN-TRANSPORTING ATPASE"/>
    <property type="match status" value="1"/>
</dbReference>
<dbReference type="PANTHER" id="PTHR30612">
    <property type="entry name" value="SECA INNER MEMBRANE COMPONENT OF SEC PROTEIN SECRETION SYSTEM"/>
    <property type="match status" value="1"/>
</dbReference>
<dbReference type="Pfam" id="PF21090">
    <property type="entry name" value="P-loop_SecA"/>
    <property type="match status" value="1"/>
</dbReference>
<dbReference type="Pfam" id="PF02810">
    <property type="entry name" value="SEC-C"/>
    <property type="match status" value="1"/>
</dbReference>
<dbReference type="Pfam" id="PF07517">
    <property type="entry name" value="SecA_DEAD"/>
    <property type="match status" value="1"/>
</dbReference>
<dbReference type="Pfam" id="PF01043">
    <property type="entry name" value="SecA_PP_bind"/>
    <property type="match status" value="1"/>
</dbReference>
<dbReference type="Pfam" id="PF07516">
    <property type="entry name" value="SecA_SW"/>
    <property type="match status" value="1"/>
</dbReference>
<dbReference type="PRINTS" id="PR00906">
    <property type="entry name" value="SECA"/>
</dbReference>
<dbReference type="SMART" id="SM00957">
    <property type="entry name" value="SecA_DEAD"/>
    <property type="match status" value="1"/>
</dbReference>
<dbReference type="SMART" id="SM00958">
    <property type="entry name" value="SecA_PP_bind"/>
    <property type="match status" value="1"/>
</dbReference>
<dbReference type="SUPFAM" id="SSF81886">
    <property type="entry name" value="Helical scaffold and wing domains of SecA"/>
    <property type="match status" value="1"/>
</dbReference>
<dbReference type="SUPFAM" id="SSF52540">
    <property type="entry name" value="P-loop containing nucleoside triphosphate hydrolases"/>
    <property type="match status" value="2"/>
</dbReference>
<dbReference type="SUPFAM" id="SSF81767">
    <property type="entry name" value="Pre-protein crosslinking domain of SecA"/>
    <property type="match status" value="1"/>
</dbReference>
<dbReference type="PROSITE" id="PS01312">
    <property type="entry name" value="SECA"/>
    <property type="match status" value="1"/>
</dbReference>
<dbReference type="PROSITE" id="PS51196">
    <property type="entry name" value="SECA_MOTOR_DEAD"/>
    <property type="match status" value="1"/>
</dbReference>
<accession>Q5HA05</accession>
<accession>Q5FCD4</accession>
<keyword id="KW-0067">ATP-binding</keyword>
<keyword id="KW-0997">Cell inner membrane</keyword>
<keyword id="KW-1003">Cell membrane</keyword>
<keyword id="KW-0963">Cytoplasm</keyword>
<keyword id="KW-0472">Membrane</keyword>
<keyword id="KW-0479">Metal-binding</keyword>
<keyword id="KW-0547">Nucleotide-binding</keyword>
<keyword id="KW-0653">Protein transport</keyword>
<keyword id="KW-1278">Translocase</keyword>
<keyword id="KW-0811">Translocation</keyword>
<keyword id="KW-0813">Transport</keyword>
<keyword id="KW-0862">Zinc</keyword>
<gene>
    <name evidence="1" type="primary">secA</name>
    <name type="ordered locus">Erum8780</name>
    <name type="ordered locus">ERWE_CDS_09290</name>
</gene>
<protein>
    <recommendedName>
        <fullName evidence="1">Protein translocase subunit SecA</fullName>
        <ecNumber evidence="1">7.4.2.8</ecNumber>
    </recommendedName>
</protein>
<proteinExistence type="inferred from homology"/>
<evidence type="ECO:0000255" key="1">
    <source>
        <dbReference type="HAMAP-Rule" id="MF_01382"/>
    </source>
</evidence>
<comment type="function">
    <text evidence="1">Part of the Sec protein translocase complex. Interacts with the SecYEG preprotein conducting channel. Has a central role in coupling the hydrolysis of ATP to the transfer of proteins into and across the cell membrane, serving both as a receptor for the preprotein-SecB complex and as an ATP-driven molecular motor driving the stepwise translocation of polypeptide chains across the membrane.</text>
</comment>
<comment type="catalytic activity">
    <reaction evidence="1">
        <text>ATP + H2O + cellular proteinSide 1 = ADP + phosphate + cellular proteinSide 2.</text>
        <dbReference type="EC" id="7.4.2.8"/>
    </reaction>
</comment>
<comment type="cofactor">
    <cofactor evidence="1">
        <name>Zn(2+)</name>
        <dbReference type="ChEBI" id="CHEBI:29105"/>
    </cofactor>
    <text evidence="1">May bind 1 zinc ion per subunit.</text>
</comment>
<comment type="subunit">
    <text evidence="1">Monomer and homodimer. Part of the essential Sec protein translocation apparatus which comprises SecA, SecYEG and auxiliary proteins SecDF-YajC and YidC.</text>
</comment>
<comment type="subcellular location">
    <subcellularLocation>
        <location evidence="1">Cell inner membrane</location>
        <topology evidence="1">Peripheral membrane protein</topology>
        <orientation evidence="1">Cytoplasmic side</orientation>
    </subcellularLocation>
    <subcellularLocation>
        <location evidence="1">Cytoplasm</location>
    </subcellularLocation>
    <text evidence="1">Distribution is 50-50.</text>
</comment>
<comment type="similarity">
    <text evidence="1">Belongs to the SecA family.</text>
</comment>
<organism>
    <name type="scientific">Ehrlichia ruminantium (strain Welgevonden)</name>
    <dbReference type="NCBI Taxonomy" id="254945"/>
    <lineage>
        <taxon>Bacteria</taxon>
        <taxon>Pseudomonadati</taxon>
        <taxon>Pseudomonadota</taxon>
        <taxon>Alphaproteobacteria</taxon>
        <taxon>Rickettsiales</taxon>
        <taxon>Anaplasmataceae</taxon>
        <taxon>Ehrlichia</taxon>
    </lineage>
</organism>
<feature type="chain" id="PRO_0000320798" description="Protein translocase subunit SecA">
    <location>
        <begin position="1"/>
        <end position="870"/>
    </location>
</feature>
<feature type="binding site" evidence="1">
    <location>
        <position position="86"/>
    </location>
    <ligand>
        <name>ATP</name>
        <dbReference type="ChEBI" id="CHEBI:30616"/>
    </ligand>
</feature>
<feature type="binding site" evidence="1">
    <location>
        <begin position="104"/>
        <end position="108"/>
    </location>
    <ligand>
        <name>ATP</name>
        <dbReference type="ChEBI" id="CHEBI:30616"/>
    </ligand>
</feature>
<feature type="binding site" evidence="1">
    <location>
        <position position="499"/>
    </location>
    <ligand>
        <name>ATP</name>
        <dbReference type="ChEBI" id="CHEBI:30616"/>
    </ligand>
</feature>
<feature type="binding site" evidence="1">
    <location>
        <position position="854"/>
    </location>
    <ligand>
        <name>Zn(2+)</name>
        <dbReference type="ChEBI" id="CHEBI:29105"/>
    </ligand>
</feature>
<feature type="binding site" evidence="1">
    <location>
        <position position="856"/>
    </location>
    <ligand>
        <name>Zn(2+)</name>
        <dbReference type="ChEBI" id="CHEBI:29105"/>
    </ligand>
</feature>
<feature type="binding site" evidence="1">
    <location>
        <position position="865"/>
    </location>
    <ligand>
        <name>Zn(2+)</name>
        <dbReference type="ChEBI" id="CHEBI:29105"/>
    </ligand>
</feature>
<feature type="binding site" evidence="1">
    <location>
        <position position="866"/>
    </location>
    <ligand>
        <name>Zn(2+)</name>
        <dbReference type="ChEBI" id="CHEBI:29105"/>
    </ligand>
</feature>